<reference key="1">
    <citation type="journal article" date="2003" name="Science">
        <title>Role of mobile DNA in the evolution of vancomycin-resistant Enterococcus faecalis.</title>
        <authorList>
            <person name="Paulsen I.T."/>
            <person name="Banerjei L."/>
            <person name="Myers G.S.A."/>
            <person name="Nelson K.E."/>
            <person name="Seshadri R."/>
            <person name="Read T.D."/>
            <person name="Fouts D.E."/>
            <person name="Eisen J.A."/>
            <person name="Gill S.R."/>
            <person name="Heidelberg J.F."/>
            <person name="Tettelin H."/>
            <person name="Dodson R.J."/>
            <person name="Umayam L.A."/>
            <person name="Brinkac L.M."/>
            <person name="Beanan M.J."/>
            <person name="Daugherty S.C."/>
            <person name="DeBoy R.T."/>
            <person name="Durkin S.A."/>
            <person name="Kolonay J.F."/>
            <person name="Madupu R."/>
            <person name="Nelson W.C."/>
            <person name="Vamathevan J.J."/>
            <person name="Tran B."/>
            <person name="Upton J."/>
            <person name="Hansen T."/>
            <person name="Shetty J."/>
            <person name="Khouri H.M."/>
            <person name="Utterback T.R."/>
            <person name="Radune D."/>
            <person name="Ketchum K.A."/>
            <person name="Dougherty B.A."/>
            <person name="Fraser C.M."/>
        </authorList>
    </citation>
    <scope>NUCLEOTIDE SEQUENCE [LARGE SCALE GENOMIC DNA]</scope>
    <source>
        <strain>ATCC 700802 / V583</strain>
    </source>
</reference>
<dbReference type="EC" id="2.1.1.192" evidence="1"/>
<dbReference type="EMBL" id="AE016830">
    <property type="protein sequence ID" value="AAO81783.1"/>
    <property type="molecule type" value="Genomic_DNA"/>
</dbReference>
<dbReference type="RefSeq" id="NP_815713.1">
    <property type="nucleotide sequence ID" value="NC_004668.1"/>
</dbReference>
<dbReference type="RefSeq" id="WP_002356987.1">
    <property type="nucleotide sequence ID" value="NZ_KE136528.1"/>
</dbReference>
<dbReference type="SMR" id="Q833B6"/>
<dbReference type="STRING" id="226185.EF_2048"/>
<dbReference type="DNASU" id="1200922"/>
<dbReference type="EnsemblBacteria" id="AAO81783">
    <property type="protein sequence ID" value="AAO81783"/>
    <property type="gene ID" value="EF_2048"/>
</dbReference>
<dbReference type="KEGG" id="efa:EF2048"/>
<dbReference type="PATRIC" id="fig|226185.45.peg.1477"/>
<dbReference type="eggNOG" id="COG0820">
    <property type="taxonomic scope" value="Bacteria"/>
</dbReference>
<dbReference type="HOGENOM" id="CLU_029101_0_1_9"/>
<dbReference type="Proteomes" id="UP000001415">
    <property type="component" value="Chromosome"/>
</dbReference>
<dbReference type="GO" id="GO:0005737">
    <property type="term" value="C:cytoplasm"/>
    <property type="evidence" value="ECO:0007669"/>
    <property type="project" value="UniProtKB-SubCell"/>
</dbReference>
<dbReference type="GO" id="GO:0051539">
    <property type="term" value="F:4 iron, 4 sulfur cluster binding"/>
    <property type="evidence" value="ECO:0007669"/>
    <property type="project" value="UniProtKB-UniRule"/>
</dbReference>
<dbReference type="GO" id="GO:0046872">
    <property type="term" value="F:metal ion binding"/>
    <property type="evidence" value="ECO:0007669"/>
    <property type="project" value="UniProtKB-KW"/>
</dbReference>
<dbReference type="GO" id="GO:0070040">
    <property type="term" value="F:rRNA (adenine(2503)-C2-)-methyltransferase activity"/>
    <property type="evidence" value="ECO:0007669"/>
    <property type="project" value="UniProtKB-UniRule"/>
</dbReference>
<dbReference type="GO" id="GO:0019843">
    <property type="term" value="F:rRNA binding"/>
    <property type="evidence" value="ECO:0007669"/>
    <property type="project" value="UniProtKB-UniRule"/>
</dbReference>
<dbReference type="GO" id="GO:0002935">
    <property type="term" value="F:tRNA (adenine(37)-C2)-methyltransferase activity"/>
    <property type="evidence" value="ECO:0007669"/>
    <property type="project" value="UniProtKB-UniRule"/>
</dbReference>
<dbReference type="GO" id="GO:0000049">
    <property type="term" value="F:tRNA binding"/>
    <property type="evidence" value="ECO:0007669"/>
    <property type="project" value="UniProtKB-UniRule"/>
</dbReference>
<dbReference type="GO" id="GO:0070475">
    <property type="term" value="P:rRNA base methylation"/>
    <property type="evidence" value="ECO:0007669"/>
    <property type="project" value="UniProtKB-UniRule"/>
</dbReference>
<dbReference type="GO" id="GO:0030488">
    <property type="term" value="P:tRNA methylation"/>
    <property type="evidence" value="ECO:0007669"/>
    <property type="project" value="UniProtKB-UniRule"/>
</dbReference>
<dbReference type="CDD" id="cd01335">
    <property type="entry name" value="Radical_SAM"/>
    <property type="match status" value="1"/>
</dbReference>
<dbReference type="FunFam" id="3.20.20.70:FF:000014">
    <property type="entry name" value="Probable dual-specificity RNA methyltransferase RlmN"/>
    <property type="match status" value="1"/>
</dbReference>
<dbReference type="Gene3D" id="1.10.150.530">
    <property type="match status" value="1"/>
</dbReference>
<dbReference type="Gene3D" id="3.20.20.70">
    <property type="entry name" value="Aldolase class I"/>
    <property type="match status" value="1"/>
</dbReference>
<dbReference type="HAMAP" id="MF_01849">
    <property type="entry name" value="RNA_methyltr_RlmN"/>
    <property type="match status" value="1"/>
</dbReference>
<dbReference type="InterPro" id="IPR013785">
    <property type="entry name" value="Aldolase_TIM"/>
</dbReference>
<dbReference type="InterPro" id="IPR040072">
    <property type="entry name" value="Methyltransferase_A"/>
</dbReference>
<dbReference type="InterPro" id="IPR048641">
    <property type="entry name" value="RlmN_N"/>
</dbReference>
<dbReference type="InterPro" id="IPR027492">
    <property type="entry name" value="RNA_MTrfase_RlmN"/>
</dbReference>
<dbReference type="InterPro" id="IPR004383">
    <property type="entry name" value="rRNA_lsu_MTrfase_RlmN/Cfr"/>
</dbReference>
<dbReference type="InterPro" id="IPR007197">
    <property type="entry name" value="rSAM"/>
</dbReference>
<dbReference type="NCBIfam" id="TIGR00048">
    <property type="entry name" value="rRNA_mod_RlmN"/>
    <property type="match status" value="1"/>
</dbReference>
<dbReference type="PANTHER" id="PTHR30544">
    <property type="entry name" value="23S RRNA METHYLTRANSFERASE"/>
    <property type="match status" value="1"/>
</dbReference>
<dbReference type="PANTHER" id="PTHR30544:SF5">
    <property type="entry name" value="RADICAL SAM CORE DOMAIN-CONTAINING PROTEIN"/>
    <property type="match status" value="1"/>
</dbReference>
<dbReference type="Pfam" id="PF04055">
    <property type="entry name" value="Radical_SAM"/>
    <property type="match status" value="1"/>
</dbReference>
<dbReference type="Pfam" id="PF21016">
    <property type="entry name" value="RlmN_N"/>
    <property type="match status" value="1"/>
</dbReference>
<dbReference type="PIRSF" id="PIRSF006004">
    <property type="entry name" value="CHP00048"/>
    <property type="match status" value="1"/>
</dbReference>
<dbReference type="SFLD" id="SFLDF00275">
    <property type="entry name" value="adenosine_C2_methyltransferase"/>
    <property type="match status" value="1"/>
</dbReference>
<dbReference type="SFLD" id="SFLDG01062">
    <property type="entry name" value="methyltransferase_(Class_A)"/>
    <property type="match status" value="1"/>
</dbReference>
<dbReference type="SUPFAM" id="SSF102114">
    <property type="entry name" value="Radical SAM enzymes"/>
    <property type="match status" value="1"/>
</dbReference>
<dbReference type="PROSITE" id="PS51918">
    <property type="entry name" value="RADICAL_SAM"/>
    <property type="match status" value="1"/>
</dbReference>
<feature type="chain" id="PRO_0000350161" description="Probable dual-specificity RNA methyltransferase RlmN">
    <location>
        <begin position="1"/>
        <end position="357"/>
    </location>
</feature>
<feature type="domain" description="Radical SAM core" evidence="2">
    <location>
        <begin position="98"/>
        <end position="330"/>
    </location>
</feature>
<feature type="active site" description="Proton acceptor" evidence="1">
    <location>
        <position position="92"/>
    </location>
</feature>
<feature type="active site" description="S-methylcysteine intermediate" evidence="1">
    <location>
        <position position="341"/>
    </location>
</feature>
<feature type="binding site" evidence="1">
    <location>
        <position position="112"/>
    </location>
    <ligand>
        <name>[4Fe-4S] cluster</name>
        <dbReference type="ChEBI" id="CHEBI:49883"/>
        <note>4Fe-4S-S-AdoMet</note>
    </ligand>
</feature>
<feature type="binding site" evidence="1">
    <location>
        <position position="116"/>
    </location>
    <ligand>
        <name>[4Fe-4S] cluster</name>
        <dbReference type="ChEBI" id="CHEBI:49883"/>
        <note>4Fe-4S-S-AdoMet</note>
    </ligand>
</feature>
<feature type="binding site" evidence="1">
    <location>
        <position position="119"/>
    </location>
    <ligand>
        <name>[4Fe-4S] cluster</name>
        <dbReference type="ChEBI" id="CHEBI:49883"/>
        <note>4Fe-4S-S-AdoMet</note>
    </ligand>
</feature>
<feature type="binding site" evidence="1">
    <location>
        <begin position="164"/>
        <end position="165"/>
    </location>
    <ligand>
        <name>S-adenosyl-L-methionine</name>
        <dbReference type="ChEBI" id="CHEBI:59789"/>
    </ligand>
</feature>
<feature type="binding site" evidence="1">
    <location>
        <position position="196"/>
    </location>
    <ligand>
        <name>S-adenosyl-L-methionine</name>
        <dbReference type="ChEBI" id="CHEBI:59789"/>
    </ligand>
</feature>
<feature type="binding site" evidence="1">
    <location>
        <begin position="219"/>
        <end position="221"/>
    </location>
    <ligand>
        <name>S-adenosyl-L-methionine</name>
        <dbReference type="ChEBI" id="CHEBI:59789"/>
    </ligand>
</feature>
<feature type="binding site" evidence="1">
    <location>
        <position position="297"/>
    </location>
    <ligand>
        <name>S-adenosyl-L-methionine</name>
        <dbReference type="ChEBI" id="CHEBI:59789"/>
    </ligand>
</feature>
<feature type="disulfide bond" description="(transient)" evidence="1">
    <location>
        <begin position="105"/>
        <end position="341"/>
    </location>
</feature>
<protein>
    <recommendedName>
        <fullName evidence="1">Probable dual-specificity RNA methyltransferase RlmN</fullName>
        <ecNumber evidence="1">2.1.1.192</ecNumber>
    </recommendedName>
    <alternativeName>
        <fullName evidence="1">23S rRNA (adenine(2503)-C(2))-methyltransferase</fullName>
    </alternativeName>
    <alternativeName>
        <fullName evidence="1">23S rRNA m2A2503 methyltransferase</fullName>
    </alternativeName>
    <alternativeName>
        <fullName evidence="1">Ribosomal RNA large subunit methyltransferase N</fullName>
    </alternativeName>
    <alternativeName>
        <fullName evidence="1">tRNA (adenine(37)-C(2))-methyltransferase</fullName>
    </alternativeName>
    <alternativeName>
        <fullName evidence="1">tRNA m2A37 methyltransferase</fullName>
    </alternativeName>
</protein>
<organism>
    <name type="scientific">Enterococcus faecalis (strain ATCC 700802 / V583)</name>
    <dbReference type="NCBI Taxonomy" id="226185"/>
    <lineage>
        <taxon>Bacteria</taxon>
        <taxon>Bacillati</taxon>
        <taxon>Bacillota</taxon>
        <taxon>Bacilli</taxon>
        <taxon>Lactobacillales</taxon>
        <taxon>Enterococcaceae</taxon>
        <taxon>Enterococcus</taxon>
    </lineage>
</organism>
<proteinExistence type="inferred from homology"/>
<evidence type="ECO:0000255" key="1">
    <source>
        <dbReference type="HAMAP-Rule" id="MF_01849"/>
    </source>
</evidence>
<evidence type="ECO:0000255" key="2">
    <source>
        <dbReference type="PROSITE-ProRule" id="PRU01266"/>
    </source>
</evidence>
<accession>Q833B6</accession>
<comment type="function">
    <text evidence="1">Specifically methylates position 2 of adenine 2503 in 23S rRNA and position 2 of adenine 37 in tRNAs.</text>
</comment>
<comment type="catalytic activity">
    <reaction evidence="1">
        <text>adenosine(2503) in 23S rRNA + 2 reduced [2Fe-2S]-[ferredoxin] + 2 S-adenosyl-L-methionine = 2-methyladenosine(2503) in 23S rRNA + 5'-deoxyadenosine + L-methionine + 2 oxidized [2Fe-2S]-[ferredoxin] + S-adenosyl-L-homocysteine</text>
        <dbReference type="Rhea" id="RHEA:42916"/>
        <dbReference type="Rhea" id="RHEA-COMP:10000"/>
        <dbReference type="Rhea" id="RHEA-COMP:10001"/>
        <dbReference type="Rhea" id="RHEA-COMP:10152"/>
        <dbReference type="Rhea" id="RHEA-COMP:10282"/>
        <dbReference type="ChEBI" id="CHEBI:17319"/>
        <dbReference type="ChEBI" id="CHEBI:33737"/>
        <dbReference type="ChEBI" id="CHEBI:33738"/>
        <dbReference type="ChEBI" id="CHEBI:57844"/>
        <dbReference type="ChEBI" id="CHEBI:57856"/>
        <dbReference type="ChEBI" id="CHEBI:59789"/>
        <dbReference type="ChEBI" id="CHEBI:74411"/>
        <dbReference type="ChEBI" id="CHEBI:74497"/>
        <dbReference type="EC" id="2.1.1.192"/>
    </reaction>
</comment>
<comment type="catalytic activity">
    <reaction evidence="1">
        <text>adenosine(37) in tRNA + 2 reduced [2Fe-2S]-[ferredoxin] + 2 S-adenosyl-L-methionine = 2-methyladenosine(37) in tRNA + 5'-deoxyadenosine + L-methionine + 2 oxidized [2Fe-2S]-[ferredoxin] + S-adenosyl-L-homocysteine</text>
        <dbReference type="Rhea" id="RHEA:43332"/>
        <dbReference type="Rhea" id="RHEA-COMP:10000"/>
        <dbReference type="Rhea" id="RHEA-COMP:10001"/>
        <dbReference type="Rhea" id="RHEA-COMP:10162"/>
        <dbReference type="Rhea" id="RHEA-COMP:10485"/>
        <dbReference type="ChEBI" id="CHEBI:17319"/>
        <dbReference type="ChEBI" id="CHEBI:33737"/>
        <dbReference type="ChEBI" id="CHEBI:33738"/>
        <dbReference type="ChEBI" id="CHEBI:57844"/>
        <dbReference type="ChEBI" id="CHEBI:57856"/>
        <dbReference type="ChEBI" id="CHEBI:59789"/>
        <dbReference type="ChEBI" id="CHEBI:74411"/>
        <dbReference type="ChEBI" id="CHEBI:74497"/>
        <dbReference type="EC" id="2.1.1.192"/>
    </reaction>
</comment>
<comment type="cofactor">
    <cofactor evidence="1">
        <name>[4Fe-4S] cluster</name>
        <dbReference type="ChEBI" id="CHEBI:49883"/>
    </cofactor>
    <text evidence="1">Binds 1 [4Fe-4S] cluster. The cluster is coordinated with 3 cysteines and an exchangeable S-adenosyl-L-methionine.</text>
</comment>
<comment type="subcellular location">
    <subcellularLocation>
        <location evidence="1">Cytoplasm</location>
    </subcellularLocation>
</comment>
<comment type="miscellaneous">
    <text evidence="1">Reaction proceeds by a ping-pong mechanism involving intermediate methylation of a conserved cysteine residue.</text>
</comment>
<comment type="similarity">
    <text evidence="1">Belongs to the radical SAM superfamily. RlmN family.</text>
</comment>
<gene>
    <name evidence="1" type="primary">rlmN</name>
    <name type="ordered locus">EF_2048</name>
</gene>
<keyword id="KW-0004">4Fe-4S</keyword>
<keyword id="KW-0963">Cytoplasm</keyword>
<keyword id="KW-1015">Disulfide bond</keyword>
<keyword id="KW-0408">Iron</keyword>
<keyword id="KW-0411">Iron-sulfur</keyword>
<keyword id="KW-0479">Metal-binding</keyword>
<keyword id="KW-0489">Methyltransferase</keyword>
<keyword id="KW-1185">Reference proteome</keyword>
<keyword id="KW-0698">rRNA processing</keyword>
<keyword id="KW-0949">S-adenosyl-L-methionine</keyword>
<keyword id="KW-0808">Transferase</keyword>
<keyword id="KW-0819">tRNA processing</keyword>
<name>RLMN_ENTFA</name>
<sequence length="357" mass="40909">MQKESIYGLTREQLVDWFLAHGEKKFRATQVWEWLYTKRVASFSEMSNISKSLMTLLEENFSLNPLKQVIVQEAQDGTVKYLFELPDKNMIETVLMRQEYGLSVCVTTQVGCNIGCTFCASGLLKKQRDLTAGEIVAQIMWVQHYFDERGLDERVSHVVVMGIGEPFDNYANVMNFLRTINDDKGLAIGARHITVSTSGLVPKIREFADSGLQVNLAISLHAPNNEVRTSIMRINRSFPIEKLMAAIDEYIEKTNRRVTFEYIMLSQVNDRPEHAQQLADLLRNKKKLSYVNLIPYNPVSEHDQYSRSSKEAVLKFYDVLKKNGINCVIRKEHGTDIDAACGQLRSKQMKKEKVKNQ</sequence>